<protein>
    <recommendedName>
        <fullName>Probable serine/threonine-protein kinase DDB_G0290621</fullName>
        <ecNumber>2.7.11.1</ecNumber>
    </recommendedName>
</protein>
<name>Y0436_DICDI</name>
<proteinExistence type="inferred from homology"/>
<feature type="chain" id="PRO_0000355154" description="Probable serine/threonine-protein kinase DDB_G0290621">
    <location>
        <begin position="1"/>
        <end position="967"/>
    </location>
</feature>
<feature type="domain" description="Protein kinase" evidence="1">
    <location>
        <begin position="345"/>
        <end position="610"/>
    </location>
</feature>
<feature type="region of interest" description="Disordered" evidence="2">
    <location>
        <begin position="65"/>
        <end position="122"/>
    </location>
</feature>
<feature type="region of interest" description="Disordered" evidence="2">
    <location>
        <begin position="215"/>
        <end position="251"/>
    </location>
</feature>
<feature type="region of interest" description="Disordered" evidence="2">
    <location>
        <begin position="287"/>
        <end position="326"/>
    </location>
</feature>
<feature type="region of interest" description="Disordered" evidence="2">
    <location>
        <begin position="634"/>
        <end position="667"/>
    </location>
</feature>
<feature type="region of interest" description="Disordered" evidence="2">
    <location>
        <begin position="700"/>
        <end position="752"/>
    </location>
</feature>
<feature type="region of interest" description="Disordered" evidence="2">
    <location>
        <begin position="862"/>
        <end position="882"/>
    </location>
</feature>
<feature type="compositionally biased region" description="Acidic residues" evidence="2">
    <location>
        <begin position="66"/>
        <end position="94"/>
    </location>
</feature>
<feature type="compositionally biased region" description="Basic and acidic residues" evidence="2">
    <location>
        <begin position="95"/>
        <end position="122"/>
    </location>
</feature>
<feature type="compositionally biased region" description="Low complexity" evidence="2">
    <location>
        <begin position="297"/>
        <end position="326"/>
    </location>
</feature>
<feature type="compositionally biased region" description="Low complexity" evidence="2">
    <location>
        <begin position="639"/>
        <end position="666"/>
    </location>
</feature>
<feature type="compositionally biased region" description="Low complexity" evidence="2">
    <location>
        <begin position="863"/>
        <end position="882"/>
    </location>
</feature>
<feature type="active site" description="Proton acceptor" evidence="1">
    <location>
        <position position="467"/>
    </location>
</feature>
<feature type="binding site" evidence="1">
    <location>
        <begin position="351"/>
        <end position="359"/>
    </location>
    <ligand>
        <name>ATP</name>
        <dbReference type="ChEBI" id="CHEBI:30616"/>
    </ligand>
</feature>
<feature type="binding site" evidence="1">
    <location>
        <position position="368"/>
    </location>
    <ligand>
        <name>ATP</name>
        <dbReference type="ChEBI" id="CHEBI:30616"/>
    </ligand>
</feature>
<reference key="1">
    <citation type="journal article" date="2005" name="Nature">
        <title>The genome of the social amoeba Dictyostelium discoideum.</title>
        <authorList>
            <person name="Eichinger L."/>
            <person name="Pachebat J.A."/>
            <person name="Gloeckner G."/>
            <person name="Rajandream M.A."/>
            <person name="Sucgang R."/>
            <person name="Berriman M."/>
            <person name="Song J."/>
            <person name="Olsen R."/>
            <person name="Szafranski K."/>
            <person name="Xu Q."/>
            <person name="Tunggal B."/>
            <person name="Kummerfeld S."/>
            <person name="Madera M."/>
            <person name="Konfortov B.A."/>
            <person name="Rivero F."/>
            <person name="Bankier A.T."/>
            <person name="Lehmann R."/>
            <person name="Hamlin N."/>
            <person name="Davies R."/>
            <person name="Gaudet P."/>
            <person name="Fey P."/>
            <person name="Pilcher K."/>
            <person name="Chen G."/>
            <person name="Saunders D."/>
            <person name="Sodergren E.J."/>
            <person name="Davis P."/>
            <person name="Kerhornou A."/>
            <person name="Nie X."/>
            <person name="Hall N."/>
            <person name="Anjard C."/>
            <person name="Hemphill L."/>
            <person name="Bason N."/>
            <person name="Farbrother P."/>
            <person name="Desany B."/>
            <person name="Just E."/>
            <person name="Morio T."/>
            <person name="Rost R."/>
            <person name="Churcher C.M."/>
            <person name="Cooper J."/>
            <person name="Haydock S."/>
            <person name="van Driessche N."/>
            <person name="Cronin A."/>
            <person name="Goodhead I."/>
            <person name="Muzny D.M."/>
            <person name="Mourier T."/>
            <person name="Pain A."/>
            <person name="Lu M."/>
            <person name="Harper D."/>
            <person name="Lindsay R."/>
            <person name="Hauser H."/>
            <person name="James K.D."/>
            <person name="Quiles M."/>
            <person name="Madan Babu M."/>
            <person name="Saito T."/>
            <person name="Buchrieser C."/>
            <person name="Wardroper A."/>
            <person name="Felder M."/>
            <person name="Thangavelu M."/>
            <person name="Johnson D."/>
            <person name="Knights A."/>
            <person name="Loulseged H."/>
            <person name="Mungall K.L."/>
            <person name="Oliver K."/>
            <person name="Price C."/>
            <person name="Quail M.A."/>
            <person name="Urushihara H."/>
            <person name="Hernandez J."/>
            <person name="Rabbinowitsch E."/>
            <person name="Steffen D."/>
            <person name="Sanders M."/>
            <person name="Ma J."/>
            <person name="Kohara Y."/>
            <person name="Sharp S."/>
            <person name="Simmonds M.N."/>
            <person name="Spiegler S."/>
            <person name="Tivey A."/>
            <person name="Sugano S."/>
            <person name="White B."/>
            <person name="Walker D."/>
            <person name="Woodward J.R."/>
            <person name="Winckler T."/>
            <person name="Tanaka Y."/>
            <person name="Shaulsky G."/>
            <person name="Schleicher M."/>
            <person name="Weinstock G.M."/>
            <person name="Rosenthal A."/>
            <person name="Cox E.C."/>
            <person name="Chisholm R.L."/>
            <person name="Gibbs R.A."/>
            <person name="Loomis W.F."/>
            <person name="Platzer M."/>
            <person name="Kay R.R."/>
            <person name="Williams J.G."/>
            <person name="Dear P.H."/>
            <person name="Noegel A.A."/>
            <person name="Barrell B.G."/>
            <person name="Kuspa A."/>
        </authorList>
    </citation>
    <scope>NUCLEOTIDE SEQUENCE [LARGE SCALE GENOMIC DNA]</scope>
    <source>
        <strain>AX4</strain>
    </source>
</reference>
<gene>
    <name type="ORF">DDB_G0290621</name>
</gene>
<accession>Q54FR9</accession>
<dbReference type="EC" id="2.7.11.1"/>
<dbReference type="EMBL" id="AAFI02000164">
    <property type="protein sequence ID" value="EAL62171.1"/>
    <property type="molecule type" value="Genomic_DNA"/>
</dbReference>
<dbReference type="RefSeq" id="XP_635698.1">
    <property type="nucleotide sequence ID" value="XM_630606.1"/>
</dbReference>
<dbReference type="SMR" id="Q54FR9"/>
<dbReference type="FunCoup" id="Q54FR9">
    <property type="interactions" value="667"/>
</dbReference>
<dbReference type="PaxDb" id="44689-DDB0220436"/>
<dbReference type="EnsemblProtists" id="EAL62171">
    <property type="protein sequence ID" value="EAL62171"/>
    <property type="gene ID" value="DDB_G0290621"/>
</dbReference>
<dbReference type="GeneID" id="8627769"/>
<dbReference type="KEGG" id="ddi:DDB_G0290621"/>
<dbReference type="dictyBase" id="DDB_G0290621"/>
<dbReference type="VEuPathDB" id="AmoebaDB:DDB_G0290621"/>
<dbReference type="eggNOG" id="KOG0192">
    <property type="taxonomic scope" value="Eukaryota"/>
</dbReference>
<dbReference type="HOGENOM" id="CLU_306405_0_0_1"/>
<dbReference type="InParanoid" id="Q54FR9"/>
<dbReference type="OMA" id="WRIPYES"/>
<dbReference type="PRO" id="PR:Q54FR9"/>
<dbReference type="Proteomes" id="UP000002195">
    <property type="component" value="Chromosome 5"/>
</dbReference>
<dbReference type="GO" id="GO:0005737">
    <property type="term" value="C:cytoplasm"/>
    <property type="evidence" value="ECO:0000318"/>
    <property type="project" value="GO_Central"/>
</dbReference>
<dbReference type="GO" id="GO:0005524">
    <property type="term" value="F:ATP binding"/>
    <property type="evidence" value="ECO:0007669"/>
    <property type="project" value="UniProtKB-KW"/>
</dbReference>
<dbReference type="GO" id="GO:0004672">
    <property type="term" value="F:protein kinase activity"/>
    <property type="evidence" value="ECO:0000318"/>
    <property type="project" value="GO_Central"/>
</dbReference>
<dbReference type="GO" id="GO:0106310">
    <property type="term" value="F:protein serine kinase activity"/>
    <property type="evidence" value="ECO:0007669"/>
    <property type="project" value="RHEA"/>
</dbReference>
<dbReference type="GO" id="GO:0004674">
    <property type="term" value="F:protein serine/threonine kinase activity"/>
    <property type="evidence" value="ECO:0007669"/>
    <property type="project" value="UniProtKB-KW"/>
</dbReference>
<dbReference type="GO" id="GO:0007165">
    <property type="term" value="P:signal transduction"/>
    <property type="evidence" value="ECO:0000318"/>
    <property type="project" value="GO_Central"/>
</dbReference>
<dbReference type="Gene3D" id="1.10.510.10">
    <property type="entry name" value="Transferase(Phosphotransferase) domain 1"/>
    <property type="match status" value="1"/>
</dbReference>
<dbReference type="InterPro" id="IPR011009">
    <property type="entry name" value="Kinase-like_dom_sf"/>
</dbReference>
<dbReference type="InterPro" id="IPR000719">
    <property type="entry name" value="Prot_kinase_dom"/>
</dbReference>
<dbReference type="InterPro" id="IPR051681">
    <property type="entry name" value="Ser/Thr_Kinases-Pseudokinases"/>
</dbReference>
<dbReference type="PANTHER" id="PTHR44329:SF140">
    <property type="entry name" value="INACTIVE PROTEIN TYROSINE KINASE PTKL"/>
    <property type="match status" value="1"/>
</dbReference>
<dbReference type="PANTHER" id="PTHR44329">
    <property type="entry name" value="SERINE/THREONINE-PROTEIN KINASE TNNI3K-RELATED"/>
    <property type="match status" value="1"/>
</dbReference>
<dbReference type="Pfam" id="PF00069">
    <property type="entry name" value="Pkinase"/>
    <property type="match status" value="1"/>
</dbReference>
<dbReference type="SMART" id="SM00220">
    <property type="entry name" value="S_TKc"/>
    <property type="match status" value="1"/>
</dbReference>
<dbReference type="SUPFAM" id="SSF56112">
    <property type="entry name" value="Protein kinase-like (PK-like)"/>
    <property type="match status" value="1"/>
</dbReference>
<dbReference type="PROSITE" id="PS50011">
    <property type="entry name" value="PROTEIN_KINASE_DOM"/>
    <property type="match status" value="1"/>
</dbReference>
<evidence type="ECO:0000255" key="1">
    <source>
        <dbReference type="PROSITE-ProRule" id="PRU00159"/>
    </source>
</evidence>
<evidence type="ECO:0000256" key="2">
    <source>
        <dbReference type="SAM" id="MobiDB-lite"/>
    </source>
</evidence>
<evidence type="ECO:0000305" key="3"/>
<comment type="catalytic activity">
    <reaction>
        <text>L-seryl-[protein] + ATP = O-phospho-L-seryl-[protein] + ADP + H(+)</text>
        <dbReference type="Rhea" id="RHEA:17989"/>
        <dbReference type="Rhea" id="RHEA-COMP:9863"/>
        <dbReference type="Rhea" id="RHEA-COMP:11604"/>
        <dbReference type="ChEBI" id="CHEBI:15378"/>
        <dbReference type="ChEBI" id="CHEBI:29999"/>
        <dbReference type="ChEBI" id="CHEBI:30616"/>
        <dbReference type="ChEBI" id="CHEBI:83421"/>
        <dbReference type="ChEBI" id="CHEBI:456216"/>
        <dbReference type="EC" id="2.7.11.1"/>
    </reaction>
</comment>
<comment type="catalytic activity">
    <reaction>
        <text>L-threonyl-[protein] + ATP = O-phospho-L-threonyl-[protein] + ADP + H(+)</text>
        <dbReference type="Rhea" id="RHEA:46608"/>
        <dbReference type="Rhea" id="RHEA-COMP:11060"/>
        <dbReference type="Rhea" id="RHEA-COMP:11605"/>
        <dbReference type="ChEBI" id="CHEBI:15378"/>
        <dbReference type="ChEBI" id="CHEBI:30013"/>
        <dbReference type="ChEBI" id="CHEBI:30616"/>
        <dbReference type="ChEBI" id="CHEBI:61977"/>
        <dbReference type="ChEBI" id="CHEBI:456216"/>
        <dbReference type="EC" id="2.7.11.1"/>
    </reaction>
</comment>
<comment type="similarity">
    <text evidence="3">Belongs to the protein kinase superfamily. TKL Ser/Thr protein kinase family.</text>
</comment>
<organism>
    <name type="scientific">Dictyostelium discoideum</name>
    <name type="common">Social amoeba</name>
    <dbReference type="NCBI Taxonomy" id="44689"/>
    <lineage>
        <taxon>Eukaryota</taxon>
        <taxon>Amoebozoa</taxon>
        <taxon>Evosea</taxon>
        <taxon>Eumycetozoa</taxon>
        <taxon>Dictyostelia</taxon>
        <taxon>Dictyosteliales</taxon>
        <taxon>Dictyosteliaceae</taxon>
        <taxon>Dictyostelium</taxon>
    </lineage>
</organism>
<keyword id="KW-0067">ATP-binding</keyword>
<keyword id="KW-0418">Kinase</keyword>
<keyword id="KW-0547">Nucleotide-binding</keyword>
<keyword id="KW-1185">Reference proteome</keyword>
<keyword id="KW-0723">Serine/threonine-protein kinase</keyword>
<keyword id="KW-0808">Transferase</keyword>
<sequence length="967" mass="110461">MNSFEKKILILKKDDKDSFIALVKQLSTKEKQILFDTIDSRIRKLQTIYLNKPFNLKFLQTFIKEDSDEDDDDEEDEEDEEDSDEEEDDDVVEDDNTKDIGKSRDSDKSIKGKEKGKEKEKEEIEIIEQRYETKVIPKKPIYKDQQQELLQQLQLQQLQQKPISPIKDNSGVSYNTSFSSLSSLSMSNSTSSSLLSTSLLSASLLSASSSGLSTSSLSSSINNSSNNNSNISSSPLSSSPLTLSSSSSSSSPLQRIQSIQNLIRSNSLRTSLSSSSSLLPNLIQLQQQQLPPPPPSQQQQQQQQQQQQQNNSMLQQSNNNNISPRTQLLNNTTTLLPNNGLEEIFNDSNKIGEGGQCSIYKYMGTAMKRFKPSLSSSLISKEFENEVLILERLNHPNIVKIITYSTIERIILLEFIDGNSLDKYPSQSLPLSPSSSLPNPLKVIQDFQQIVDAMIYLHNEIGIIHFDLKPSNILKNSKNNKLKLIDFGISKFLNNNNQNNNNNSLNMGSYRYSPPELLCNNNQNNNLINKSVDVFSFGIMLWECLNWTLPYESLSREQVKQIKTDMERESHLPLDHLPKGIQDLIRLCWKHDPSIRPSFIEIRSRLSEIILNNIPSLNGRQFWISSSKYLQQNDDSLINNNNNNNQNNNNQNNNNNNNNNNNNNNNNKDETTSIIIYESIPWLKFKTFLSNHLNIYRQSSTSNSNSSFNLNNNSSRNNQRQQQQQNNRNRSVYNNNYNNNNNNIINNNNNNINNNRNRNYNAYYEYIFDYIRYILKVIDEKRDEVSVIEFSRFCTFFSPLISSSLFRSIQIFCDIPGLYGYCLKKDLILSSSMITLMSKIGYLIFIDPNNINQLFLKMKAPTSSSSNKNNNNNNNDNNNPSNFIDFTIRVKIGNYNQRIFQCHGHTSSSLSGLIKELQPLIDNNNSGNSSGSSSSKKSNSGFLYQKTPISEIKDRHINGSYLNQNYK</sequence>